<name>MIAB_CAUSK</name>
<reference key="1">
    <citation type="submission" date="2008-01" db="EMBL/GenBank/DDBJ databases">
        <title>Complete sequence of chromosome of Caulobacter sp. K31.</title>
        <authorList>
            <consortium name="US DOE Joint Genome Institute"/>
            <person name="Copeland A."/>
            <person name="Lucas S."/>
            <person name="Lapidus A."/>
            <person name="Barry K."/>
            <person name="Glavina del Rio T."/>
            <person name="Dalin E."/>
            <person name="Tice H."/>
            <person name="Pitluck S."/>
            <person name="Bruce D."/>
            <person name="Goodwin L."/>
            <person name="Thompson L.S."/>
            <person name="Brettin T."/>
            <person name="Detter J.C."/>
            <person name="Han C."/>
            <person name="Schmutz J."/>
            <person name="Larimer F."/>
            <person name="Land M."/>
            <person name="Hauser L."/>
            <person name="Kyrpides N."/>
            <person name="Kim E."/>
            <person name="Stephens C."/>
            <person name="Richardson P."/>
        </authorList>
    </citation>
    <scope>NUCLEOTIDE SEQUENCE [LARGE SCALE GENOMIC DNA]</scope>
    <source>
        <strain>K31</strain>
    </source>
</reference>
<dbReference type="EC" id="2.8.4.3" evidence="1"/>
<dbReference type="EMBL" id="CP000927">
    <property type="protein sequence ID" value="ABZ69159.1"/>
    <property type="molecule type" value="Genomic_DNA"/>
</dbReference>
<dbReference type="SMR" id="B0T155"/>
<dbReference type="STRING" id="366602.Caul_0021"/>
<dbReference type="KEGG" id="cak:Caul_0021"/>
<dbReference type="eggNOG" id="COG0621">
    <property type="taxonomic scope" value="Bacteria"/>
</dbReference>
<dbReference type="HOGENOM" id="CLU_018697_2_0_5"/>
<dbReference type="OrthoDB" id="9805215at2"/>
<dbReference type="GO" id="GO:0005829">
    <property type="term" value="C:cytosol"/>
    <property type="evidence" value="ECO:0007669"/>
    <property type="project" value="TreeGrafter"/>
</dbReference>
<dbReference type="GO" id="GO:0051539">
    <property type="term" value="F:4 iron, 4 sulfur cluster binding"/>
    <property type="evidence" value="ECO:0007669"/>
    <property type="project" value="UniProtKB-UniRule"/>
</dbReference>
<dbReference type="GO" id="GO:0046872">
    <property type="term" value="F:metal ion binding"/>
    <property type="evidence" value="ECO:0007669"/>
    <property type="project" value="UniProtKB-KW"/>
</dbReference>
<dbReference type="GO" id="GO:0035597">
    <property type="term" value="F:N6-isopentenyladenosine methylthiotransferase activity"/>
    <property type="evidence" value="ECO:0007669"/>
    <property type="project" value="TreeGrafter"/>
</dbReference>
<dbReference type="CDD" id="cd01335">
    <property type="entry name" value="Radical_SAM"/>
    <property type="match status" value="1"/>
</dbReference>
<dbReference type="FunFam" id="3.40.50.12160:FF:000003">
    <property type="entry name" value="CDK5 regulatory subunit-associated protein 1"/>
    <property type="match status" value="1"/>
</dbReference>
<dbReference type="FunFam" id="3.80.30.20:FF:000001">
    <property type="entry name" value="tRNA-2-methylthio-N(6)-dimethylallyladenosine synthase 2"/>
    <property type="match status" value="1"/>
</dbReference>
<dbReference type="Gene3D" id="3.40.50.12160">
    <property type="entry name" value="Methylthiotransferase, N-terminal domain"/>
    <property type="match status" value="1"/>
</dbReference>
<dbReference type="Gene3D" id="3.80.30.20">
    <property type="entry name" value="tm_1862 like domain"/>
    <property type="match status" value="1"/>
</dbReference>
<dbReference type="HAMAP" id="MF_01864">
    <property type="entry name" value="tRNA_metthiotr_MiaB"/>
    <property type="match status" value="1"/>
</dbReference>
<dbReference type="InterPro" id="IPR006638">
    <property type="entry name" value="Elp3/MiaA/NifB-like_rSAM"/>
</dbReference>
<dbReference type="InterPro" id="IPR005839">
    <property type="entry name" value="Methylthiotransferase"/>
</dbReference>
<dbReference type="InterPro" id="IPR020612">
    <property type="entry name" value="Methylthiotransferase_CS"/>
</dbReference>
<dbReference type="InterPro" id="IPR013848">
    <property type="entry name" value="Methylthiotransferase_N"/>
</dbReference>
<dbReference type="InterPro" id="IPR038135">
    <property type="entry name" value="Methylthiotransferase_N_sf"/>
</dbReference>
<dbReference type="InterPro" id="IPR006463">
    <property type="entry name" value="MiaB_methiolase"/>
</dbReference>
<dbReference type="InterPro" id="IPR007197">
    <property type="entry name" value="rSAM"/>
</dbReference>
<dbReference type="InterPro" id="IPR023404">
    <property type="entry name" value="rSAM_horseshoe"/>
</dbReference>
<dbReference type="InterPro" id="IPR002792">
    <property type="entry name" value="TRAM_dom"/>
</dbReference>
<dbReference type="NCBIfam" id="TIGR01574">
    <property type="entry name" value="miaB-methiolase"/>
    <property type="match status" value="1"/>
</dbReference>
<dbReference type="NCBIfam" id="TIGR00089">
    <property type="entry name" value="MiaB/RimO family radical SAM methylthiotransferase"/>
    <property type="match status" value="1"/>
</dbReference>
<dbReference type="PANTHER" id="PTHR43020">
    <property type="entry name" value="CDK5 REGULATORY SUBUNIT-ASSOCIATED PROTEIN 1"/>
    <property type="match status" value="1"/>
</dbReference>
<dbReference type="PANTHER" id="PTHR43020:SF2">
    <property type="entry name" value="MITOCHONDRIAL TRNA METHYLTHIOTRANSFERASE CDK5RAP1"/>
    <property type="match status" value="1"/>
</dbReference>
<dbReference type="Pfam" id="PF04055">
    <property type="entry name" value="Radical_SAM"/>
    <property type="match status" value="1"/>
</dbReference>
<dbReference type="Pfam" id="PF01938">
    <property type="entry name" value="TRAM"/>
    <property type="match status" value="1"/>
</dbReference>
<dbReference type="Pfam" id="PF00919">
    <property type="entry name" value="UPF0004"/>
    <property type="match status" value="1"/>
</dbReference>
<dbReference type="SFLD" id="SFLDF00273">
    <property type="entry name" value="(dimethylallyl)adenosine_tRNA"/>
    <property type="match status" value="1"/>
</dbReference>
<dbReference type="SFLD" id="SFLDG01082">
    <property type="entry name" value="B12-binding_domain_containing"/>
    <property type="match status" value="1"/>
</dbReference>
<dbReference type="SFLD" id="SFLDS00029">
    <property type="entry name" value="Radical_SAM"/>
    <property type="match status" value="1"/>
</dbReference>
<dbReference type="SMART" id="SM00729">
    <property type="entry name" value="Elp3"/>
    <property type="match status" value="1"/>
</dbReference>
<dbReference type="SUPFAM" id="SSF102114">
    <property type="entry name" value="Radical SAM enzymes"/>
    <property type="match status" value="1"/>
</dbReference>
<dbReference type="PROSITE" id="PS51449">
    <property type="entry name" value="MTTASE_N"/>
    <property type="match status" value="1"/>
</dbReference>
<dbReference type="PROSITE" id="PS01278">
    <property type="entry name" value="MTTASE_RADICAL"/>
    <property type="match status" value="1"/>
</dbReference>
<dbReference type="PROSITE" id="PS51918">
    <property type="entry name" value="RADICAL_SAM"/>
    <property type="match status" value="1"/>
</dbReference>
<dbReference type="PROSITE" id="PS50926">
    <property type="entry name" value="TRAM"/>
    <property type="match status" value="1"/>
</dbReference>
<feature type="chain" id="PRO_0000374204" description="tRNA-2-methylthio-N(6)-dimethylallyladenosine synthase">
    <location>
        <begin position="1"/>
        <end position="450"/>
    </location>
</feature>
<feature type="domain" description="MTTase N-terminal" evidence="1">
    <location>
        <begin position="7"/>
        <end position="127"/>
    </location>
</feature>
<feature type="domain" description="Radical SAM core" evidence="2">
    <location>
        <begin position="151"/>
        <end position="378"/>
    </location>
</feature>
<feature type="domain" description="TRAM" evidence="1">
    <location>
        <begin position="381"/>
        <end position="443"/>
    </location>
</feature>
<feature type="binding site" evidence="1">
    <location>
        <position position="16"/>
    </location>
    <ligand>
        <name>[4Fe-4S] cluster</name>
        <dbReference type="ChEBI" id="CHEBI:49883"/>
        <label>1</label>
    </ligand>
</feature>
<feature type="binding site" evidence="1">
    <location>
        <position position="52"/>
    </location>
    <ligand>
        <name>[4Fe-4S] cluster</name>
        <dbReference type="ChEBI" id="CHEBI:49883"/>
        <label>1</label>
    </ligand>
</feature>
<feature type="binding site" evidence="1">
    <location>
        <position position="90"/>
    </location>
    <ligand>
        <name>[4Fe-4S] cluster</name>
        <dbReference type="ChEBI" id="CHEBI:49883"/>
        <label>1</label>
    </ligand>
</feature>
<feature type="binding site" evidence="1">
    <location>
        <position position="165"/>
    </location>
    <ligand>
        <name>[4Fe-4S] cluster</name>
        <dbReference type="ChEBI" id="CHEBI:49883"/>
        <label>2</label>
        <note>4Fe-4S-S-AdoMet</note>
    </ligand>
</feature>
<feature type="binding site" evidence="1">
    <location>
        <position position="169"/>
    </location>
    <ligand>
        <name>[4Fe-4S] cluster</name>
        <dbReference type="ChEBI" id="CHEBI:49883"/>
        <label>2</label>
        <note>4Fe-4S-S-AdoMet</note>
    </ligand>
</feature>
<feature type="binding site" evidence="1">
    <location>
        <position position="172"/>
    </location>
    <ligand>
        <name>[4Fe-4S] cluster</name>
        <dbReference type="ChEBI" id="CHEBI:49883"/>
        <label>2</label>
        <note>4Fe-4S-S-AdoMet</note>
    </ligand>
</feature>
<comment type="function">
    <text evidence="1">Catalyzes the methylthiolation of N6-(dimethylallyl)adenosine (i(6)A), leading to the formation of 2-methylthio-N6-(dimethylallyl)adenosine (ms(2)i(6)A) at position 37 in tRNAs that read codons beginning with uridine.</text>
</comment>
<comment type="catalytic activity">
    <reaction evidence="1">
        <text>N(6)-dimethylallyladenosine(37) in tRNA + (sulfur carrier)-SH + AH2 + 2 S-adenosyl-L-methionine = 2-methylsulfanyl-N(6)-dimethylallyladenosine(37) in tRNA + (sulfur carrier)-H + 5'-deoxyadenosine + L-methionine + A + S-adenosyl-L-homocysteine + 2 H(+)</text>
        <dbReference type="Rhea" id="RHEA:37067"/>
        <dbReference type="Rhea" id="RHEA-COMP:10375"/>
        <dbReference type="Rhea" id="RHEA-COMP:10376"/>
        <dbReference type="Rhea" id="RHEA-COMP:14737"/>
        <dbReference type="Rhea" id="RHEA-COMP:14739"/>
        <dbReference type="ChEBI" id="CHEBI:13193"/>
        <dbReference type="ChEBI" id="CHEBI:15378"/>
        <dbReference type="ChEBI" id="CHEBI:17319"/>
        <dbReference type="ChEBI" id="CHEBI:17499"/>
        <dbReference type="ChEBI" id="CHEBI:29917"/>
        <dbReference type="ChEBI" id="CHEBI:57844"/>
        <dbReference type="ChEBI" id="CHEBI:57856"/>
        <dbReference type="ChEBI" id="CHEBI:59789"/>
        <dbReference type="ChEBI" id="CHEBI:64428"/>
        <dbReference type="ChEBI" id="CHEBI:74415"/>
        <dbReference type="ChEBI" id="CHEBI:74417"/>
        <dbReference type="EC" id="2.8.4.3"/>
    </reaction>
</comment>
<comment type="cofactor">
    <cofactor evidence="1">
        <name>[4Fe-4S] cluster</name>
        <dbReference type="ChEBI" id="CHEBI:49883"/>
    </cofactor>
    <text evidence="1">Binds 2 [4Fe-4S] clusters. One cluster is coordinated with 3 cysteines and an exchangeable S-adenosyl-L-methionine.</text>
</comment>
<comment type="subunit">
    <text evidence="1">Monomer.</text>
</comment>
<comment type="subcellular location">
    <subcellularLocation>
        <location evidence="1">Cytoplasm</location>
    </subcellularLocation>
</comment>
<comment type="similarity">
    <text evidence="1">Belongs to the methylthiotransferase family. MiaB subfamily.</text>
</comment>
<organism>
    <name type="scientific">Caulobacter sp. (strain K31)</name>
    <dbReference type="NCBI Taxonomy" id="366602"/>
    <lineage>
        <taxon>Bacteria</taxon>
        <taxon>Pseudomonadati</taxon>
        <taxon>Pseudomonadota</taxon>
        <taxon>Alphaproteobacteria</taxon>
        <taxon>Caulobacterales</taxon>
        <taxon>Caulobacteraceae</taxon>
        <taxon>Caulobacter</taxon>
    </lineage>
</organism>
<protein>
    <recommendedName>
        <fullName evidence="1">tRNA-2-methylthio-N(6)-dimethylallyladenosine synthase</fullName>
        <ecNumber evidence="1">2.8.4.3</ecNumber>
    </recommendedName>
    <alternativeName>
        <fullName evidence="1">(Dimethylallyl)adenosine tRNA methylthiotransferase MiaB</fullName>
    </alternativeName>
    <alternativeName>
        <fullName evidence="1">tRNA-i(6)A37 methylthiotransferase</fullName>
    </alternativeName>
</protein>
<proteinExistence type="inferred from homology"/>
<accession>B0T155</accession>
<keyword id="KW-0004">4Fe-4S</keyword>
<keyword id="KW-0963">Cytoplasm</keyword>
<keyword id="KW-0408">Iron</keyword>
<keyword id="KW-0411">Iron-sulfur</keyword>
<keyword id="KW-0479">Metal-binding</keyword>
<keyword id="KW-0949">S-adenosyl-L-methionine</keyword>
<keyword id="KW-0808">Transferase</keyword>
<keyword id="KW-0819">tRNA processing</keyword>
<gene>
    <name evidence="1" type="primary">miaB</name>
    <name type="ordered locus">Caul_0021</name>
</gene>
<evidence type="ECO:0000255" key="1">
    <source>
        <dbReference type="HAMAP-Rule" id="MF_01864"/>
    </source>
</evidence>
<evidence type="ECO:0000255" key="2">
    <source>
        <dbReference type="PROSITE-ProRule" id="PRU01266"/>
    </source>
</evidence>
<sequence>MSETPQKRLYIKTYGCQMNVYDSERMADVLRPLGYGIVDEPEGADLVVLNTCHIREKATEKVYSELGYIKQMKGRKAEAGGQMTVAVAGCVAQAEGQEIMRRQPAVDLVVGPQAYHQLPELIARAHRATGERLSADFAADEKFDALPAERQVSGVSAFLTVQEGCDKFCTFCVVPYTRGGEWSRPPEQIEDEARRLADQGVREVTLLGQNVNAYDGGGYTLARLVRRLAKIPGLDRIRYTTSHPRDMGDDLIEAHGELPELMPYLHLPVQAGSDKILKAMNRDHTAESYIRLIEKIRQARPDIAMSGDFIVGFPGERDGDFEKTLDLVREVGFASAFSFKYSRRPGTPASAMPGQVDEAVKAERLERLNQLLDEQQKAFNILQVGKTMPVLFEKKGRNPGQIVGRSPYLQAVHAVGSEDLLGQIVPVRIESSAKMSLGGVLETQPLPEPA</sequence>